<reference key="1">
    <citation type="submission" date="2005-09" db="EMBL/GenBank/DDBJ databases">
        <authorList>
            <consortium name="NIH - Mammalian Gene Collection (MGC) project"/>
        </authorList>
    </citation>
    <scope>NUCLEOTIDE SEQUENCE [LARGE SCALE MRNA]</scope>
    <source>
        <strain>Hereford</strain>
        <tissue>Ascending colon</tissue>
    </source>
</reference>
<organism>
    <name type="scientific">Bos taurus</name>
    <name type="common">Bovine</name>
    <dbReference type="NCBI Taxonomy" id="9913"/>
    <lineage>
        <taxon>Eukaryota</taxon>
        <taxon>Metazoa</taxon>
        <taxon>Chordata</taxon>
        <taxon>Craniata</taxon>
        <taxon>Vertebrata</taxon>
        <taxon>Euteleostomi</taxon>
        <taxon>Mammalia</taxon>
        <taxon>Eutheria</taxon>
        <taxon>Laurasiatheria</taxon>
        <taxon>Artiodactyla</taxon>
        <taxon>Ruminantia</taxon>
        <taxon>Pecora</taxon>
        <taxon>Bovidae</taxon>
        <taxon>Bovinae</taxon>
        <taxon>Bos</taxon>
    </lineage>
</organism>
<feature type="signal peptide" evidence="1">
    <location>
        <begin position="1"/>
        <end position="20"/>
    </location>
</feature>
<feature type="propeptide" id="PRO_0000282861" description="Removed in mature form">
    <location>
        <begin position="21"/>
        <end position="86"/>
    </location>
</feature>
<feature type="chain" id="PRO_0000282862" description="Platelet-derived growth factor subunit A">
    <location>
        <begin position="87"/>
        <end position="211"/>
    </location>
</feature>
<feature type="region of interest" description="Receptor binding site" evidence="2">
    <location>
        <begin position="158"/>
        <end position="162"/>
    </location>
</feature>
<feature type="region of interest" description="Disordered" evidence="3">
    <location>
        <begin position="180"/>
        <end position="211"/>
    </location>
</feature>
<feature type="compositionally biased region" description="Basic and acidic residues" evidence="3">
    <location>
        <begin position="186"/>
        <end position="197"/>
    </location>
</feature>
<feature type="compositionally biased region" description="Basic residues" evidence="3">
    <location>
        <begin position="198"/>
        <end position="211"/>
    </location>
</feature>
<feature type="glycosylation site" description="N-linked (GlcNAc...) asparagine" evidence="2">
    <location>
        <position position="134"/>
    </location>
</feature>
<feature type="disulfide bond" evidence="1">
    <location>
        <begin position="96"/>
        <end position="140"/>
    </location>
</feature>
<feature type="disulfide bond" description="Interchain" evidence="1">
    <location>
        <position position="123"/>
    </location>
</feature>
<feature type="disulfide bond" evidence="1">
    <location>
        <begin position="129"/>
        <end position="177"/>
    </location>
</feature>
<feature type="disulfide bond" description="Interchain" evidence="1">
    <location>
        <position position="132"/>
    </location>
</feature>
<feature type="disulfide bond" evidence="1">
    <location>
        <begin position="133"/>
        <end position="179"/>
    </location>
</feature>
<name>PDGFA_BOVIN</name>
<dbReference type="EMBL" id="BC105569">
    <property type="protein sequence ID" value="AAI05570.1"/>
    <property type="molecule type" value="mRNA"/>
</dbReference>
<dbReference type="RefSeq" id="NP_001068699.1">
    <property type="nucleotide sequence ID" value="NM_001075231.1"/>
</dbReference>
<dbReference type="RefSeq" id="XP_024840469.1">
    <property type="nucleotide sequence ID" value="XM_024984701.2"/>
</dbReference>
<dbReference type="RefSeq" id="XP_024840470.1">
    <property type="nucleotide sequence ID" value="XM_024984702.2"/>
</dbReference>
<dbReference type="RefSeq" id="XP_059737174.1">
    <property type="nucleotide sequence ID" value="XM_059881191.1"/>
</dbReference>
<dbReference type="SMR" id="Q2KJ15"/>
<dbReference type="FunCoup" id="Q2KJ15">
    <property type="interactions" value="554"/>
</dbReference>
<dbReference type="STRING" id="9913.ENSBTAP00000063379"/>
<dbReference type="GlyCosmos" id="Q2KJ15">
    <property type="glycosylation" value="1 site, No reported glycans"/>
</dbReference>
<dbReference type="GlyGen" id="Q2KJ15">
    <property type="glycosylation" value="1 site"/>
</dbReference>
<dbReference type="PaxDb" id="9913-ENSBTAP00000019323"/>
<dbReference type="GeneID" id="505908"/>
<dbReference type="KEGG" id="bta:505908"/>
<dbReference type="CTD" id="5154"/>
<dbReference type="VEuPathDB" id="HostDB:ENSBTAG00000014541"/>
<dbReference type="eggNOG" id="ENOG502QVAU">
    <property type="taxonomic scope" value="Eukaryota"/>
</dbReference>
<dbReference type="InParanoid" id="Q2KJ15"/>
<dbReference type="OMA" id="NSEYREH"/>
<dbReference type="OrthoDB" id="8878063at2759"/>
<dbReference type="Reactome" id="R-BTA-114608">
    <property type="pathway name" value="Platelet degranulation"/>
</dbReference>
<dbReference type="Reactome" id="R-BTA-1257604">
    <property type="pathway name" value="PIP3 activates AKT signaling"/>
</dbReference>
<dbReference type="Reactome" id="R-BTA-186763">
    <property type="pathway name" value="Downstream signal transduction"/>
</dbReference>
<dbReference type="Reactome" id="R-BTA-186797">
    <property type="pathway name" value="Signaling by PDGF"/>
</dbReference>
<dbReference type="Reactome" id="R-BTA-5673001">
    <property type="pathway name" value="RAF/MAP kinase cascade"/>
</dbReference>
<dbReference type="Reactome" id="R-BTA-6811558">
    <property type="pathway name" value="PI5P, PP2A and IER3 Regulate PI3K/AKT Signaling"/>
</dbReference>
<dbReference type="Proteomes" id="UP000009136">
    <property type="component" value="Chromosome 25"/>
</dbReference>
<dbReference type="Bgee" id="ENSBTAG00000014541">
    <property type="expression patterns" value="Expressed in prostate gland and 104 other cell types or tissues"/>
</dbReference>
<dbReference type="GO" id="GO:0009986">
    <property type="term" value="C:cell surface"/>
    <property type="evidence" value="ECO:0000250"/>
    <property type="project" value="UniProtKB"/>
</dbReference>
<dbReference type="GO" id="GO:0005615">
    <property type="term" value="C:extracellular space"/>
    <property type="evidence" value="ECO:0000250"/>
    <property type="project" value="UniProtKB"/>
</dbReference>
<dbReference type="GO" id="GO:0016020">
    <property type="term" value="C:membrane"/>
    <property type="evidence" value="ECO:0007669"/>
    <property type="project" value="InterPro"/>
</dbReference>
<dbReference type="GO" id="GO:0005518">
    <property type="term" value="F:collagen binding"/>
    <property type="evidence" value="ECO:0000250"/>
    <property type="project" value="UniProtKB"/>
</dbReference>
<dbReference type="GO" id="GO:0008083">
    <property type="term" value="F:growth factor activity"/>
    <property type="evidence" value="ECO:0000250"/>
    <property type="project" value="UniProtKB"/>
</dbReference>
<dbReference type="GO" id="GO:0005161">
    <property type="term" value="F:platelet-derived growth factor receptor binding"/>
    <property type="evidence" value="ECO:0000250"/>
    <property type="project" value="UniProtKB"/>
</dbReference>
<dbReference type="GO" id="GO:0042803">
    <property type="term" value="F:protein homodimerization activity"/>
    <property type="evidence" value="ECO:0000250"/>
    <property type="project" value="UniProtKB"/>
</dbReference>
<dbReference type="GO" id="GO:0001525">
    <property type="term" value="P:angiogenesis"/>
    <property type="evidence" value="ECO:0000318"/>
    <property type="project" value="GO_Central"/>
</dbReference>
<dbReference type="GO" id="GO:0050919">
    <property type="term" value="P:negative chemotaxis"/>
    <property type="evidence" value="ECO:0000250"/>
    <property type="project" value="UniProtKB"/>
</dbReference>
<dbReference type="GO" id="GO:0010512">
    <property type="term" value="P:negative regulation of phosphatidylinositol biosynthetic process"/>
    <property type="evidence" value="ECO:0000250"/>
    <property type="project" value="UniProtKB"/>
</dbReference>
<dbReference type="GO" id="GO:0010544">
    <property type="term" value="P:negative regulation of platelet activation"/>
    <property type="evidence" value="ECO:0000250"/>
    <property type="project" value="UniProtKB"/>
</dbReference>
<dbReference type="GO" id="GO:0048008">
    <property type="term" value="P:platelet-derived growth factor receptor signaling pathway"/>
    <property type="evidence" value="ECO:0000250"/>
    <property type="project" value="UniProtKB"/>
</dbReference>
<dbReference type="GO" id="GO:0051781">
    <property type="term" value="P:positive regulation of cell division"/>
    <property type="evidence" value="ECO:0007669"/>
    <property type="project" value="UniProtKB-KW"/>
</dbReference>
<dbReference type="GO" id="GO:0030335">
    <property type="term" value="P:positive regulation of cell migration"/>
    <property type="evidence" value="ECO:0000250"/>
    <property type="project" value="UniProtKB"/>
</dbReference>
<dbReference type="GO" id="GO:0008284">
    <property type="term" value="P:positive regulation of cell population proliferation"/>
    <property type="evidence" value="ECO:0000250"/>
    <property type="project" value="UniProtKB"/>
</dbReference>
<dbReference type="GO" id="GO:0070374">
    <property type="term" value="P:positive regulation of ERK1 and ERK2 cascade"/>
    <property type="evidence" value="ECO:0000250"/>
    <property type="project" value="UniProtKB"/>
</dbReference>
<dbReference type="GO" id="GO:0048146">
    <property type="term" value="P:positive regulation of fibroblast proliferation"/>
    <property type="evidence" value="ECO:0000250"/>
    <property type="project" value="UniProtKB"/>
</dbReference>
<dbReference type="GO" id="GO:0043410">
    <property type="term" value="P:positive regulation of MAPK cascade"/>
    <property type="evidence" value="ECO:0000250"/>
    <property type="project" value="UniProtKB"/>
</dbReference>
<dbReference type="GO" id="GO:0035793">
    <property type="term" value="P:positive regulation of metanephric mesenchymal cell migration by platelet-derived growth factor receptor-beta signaling pathway"/>
    <property type="evidence" value="ECO:0000250"/>
    <property type="project" value="UniProtKB"/>
</dbReference>
<dbReference type="GO" id="GO:0051897">
    <property type="term" value="P:positive regulation of phosphatidylinositol 3-kinase/protein kinase B signal transduction"/>
    <property type="evidence" value="ECO:0000250"/>
    <property type="project" value="UniProtKB"/>
</dbReference>
<dbReference type="GO" id="GO:0031954">
    <property type="term" value="P:positive regulation of protein autophosphorylation"/>
    <property type="evidence" value="ECO:0000250"/>
    <property type="project" value="UniProtKB"/>
</dbReference>
<dbReference type="GO" id="GO:0014910">
    <property type="term" value="P:regulation of smooth muscle cell migration"/>
    <property type="evidence" value="ECO:0000250"/>
    <property type="project" value="UniProtKB"/>
</dbReference>
<dbReference type="GO" id="GO:0009611">
    <property type="term" value="P:response to wounding"/>
    <property type="evidence" value="ECO:0000250"/>
    <property type="project" value="UniProtKB"/>
</dbReference>
<dbReference type="CDD" id="cd00135">
    <property type="entry name" value="PDGF"/>
    <property type="match status" value="1"/>
</dbReference>
<dbReference type="FunFam" id="2.10.90.10:FF:000017">
    <property type="entry name" value="Platelet derived growth factor subunit A"/>
    <property type="match status" value="1"/>
</dbReference>
<dbReference type="Gene3D" id="2.10.90.10">
    <property type="entry name" value="Cystine-knot cytokines"/>
    <property type="match status" value="1"/>
</dbReference>
<dbReference type="InterPro" id="IPR029034">
    <property type="entry name" value="Cystine-knot_cytokine"/>
</dbReference>
<dbReference type="InterPro" id="IPR023581">
    <property type="entry name" value="PD_growth_factor_CS"/>
</dbReference>
<dbReference type="InterPro" id="IPR000072">
    <property type="entry name" value="PDGF/VEGF_dom"/>
</dbReference>
<dbReference type="InterPro" id="IPR006782">
    <property type="entry name" value="PDGF_N"/>
</dbReference>
<dbReference type="PANTHER" id="PTHR11633">
    <property type="entry name" value="PLATELET-DERIVED GROWTH FACTOR"/>
    <property type="match status" value="1"/>
</dbReference>
<dbReference type="PANTHER" id="PTHR11633:SF3">
    <property type="entry name" value="PLATELET-DERIVED GROWTH FACTOR SUBUNIT A"/>
    <property type="match status" value="1"/>
</dbReference>
<dbReference type="Pfam" id="PF00341">
    <property type="entry name" value="PDGF"/>
    <property type="match status" value="1"/>
</dbReference>
<dbReference type="Pfam" id="PF04692">
    <property type="entry name" value="PDGF_N"/>
    <property type="match status" value="1"/>
</dbReference>
<dbReference type="SMART" id="SM00141">
    <property type="entry name" value="PDGF"/>
    <property type="match status" value="1"/>
</dbReference>
<dbReference type="SUPFAM" id="SSF57501">
    <property type="entry name" value="Cystine-knot cytokines"/>
    <property type="match status" value="1"/>
</dbReference>
<dbReference type="PROSITE" id="PS00249">
    <property type="entry name" value="PDGF_1"/>
    <property type="match status" value="1"/>
</dbReference>
<dbReference type="PROSITE" id="PS50278">
    <property type="entry name" value="PDGF_2"/>
    <property type="match status" value="1"/>
</dbReference>
<protein>
    <recommendedName>
        <fullName>Platelet-derived growth factor subunit A</fullName>
        <shortName>PDGF subunit A</shortName>
    </recommendedName>
    <alternativeName>
        <fullName>Platelet-derived growth factor A chain</fullName>
    </alternativeName>
    <alternativeName>
        <fullName>Platelet-derived growth factor alpha polypeptide</fullName>
    </alternativeName>
</protein>
<accession>Q2KJ15</accession>
<sequence>MRTWACLLLLGCGYLANALAEEAEIPREVIERLAHSQIHSIRDLQRLLEIDSVGAEEPLETSLRAHGGHGAKHALEKRPVPIRRKRSIEEAIPAVCKTRTVIYEIPRSQVDPTSANFLIWPPCVEVKRCTGCCNTSSVKCQPSRVHHRNVKVAKVEYFRKKAKLKEVQVRLEEHLECTCTSASPSPDHREEEAGRRRESGKKRKRKRLKPT</sequence>
<proteinExistence type="evidence at transcript level"/>
<evidence type="ECO:0000250" key="1"/>
<evidence type="ECO:0000255" key="2"/>
<evidence type="ECO:0000256" key="3">
    <source>
        <dbReference type="SAM" id="MobiDB-lite"/>
    </source>
</evidence>
<evidence type="ECO:0000305" key="4"/>
<gene>
    <name type="primary">PDGFA</name>
</gene>
<comment type="function">
    <text evidence="1">Growth factor that plays an essential role in the regulation of embryonic development, cell proliferation, cell migration, survival and chemotaxis. Potent mitogen for cells of mesenchymal origin. Required for normal lung alveolar septum formation during embryogenesis, normal development of the gastrointestinal tract, normal development of Leydig cells and spermatogenesis. Required for normal oligodendrocyte development and normal myelination in the spinal cord and cerebellum. Plays an important role in wound healing. Signaling is modulated by the formation of heterodimers with PDGFB (By similarity).</text>
</comment>
<comment type="subunit">
    <text evidence="1">Homodimer; antiparallel disulfide-linked dimer. Heterodimer with PDGFB; antiparallel disulfide-linked dimer. The PDGFA homodimer interacts with PDGFRA homodimers, and with heterodimers formed by PDGFRA and PDGFRB. The heterodimer composed of PDGFA and PDGFB interacts with PDGFRA homodimers, and with heterodimers formed by PDGFRA and PDGFRB. Interacts with CSPG4 (By similarity).</text>
</comment>
<comment type="subcellular location">
    <subcellularLocation>
        <location evidence="1">Secreted</location>
    </subcellularLocation>
    <text evidence="1">Released by platelets upon wounding.</text>
</comment>
<comment type="similarity">
    <text evidence="4">Belongs to the PDGF/VEGF growth factor family.</text>
</comment>
<keyword id="KW-0165">Cleavage on pair of basic residues</keyword>
<keyword id="KW-0217">Developmental protein</keyword>
<keyword id="KW-1015">Disulfide bond</keyword>
<keyword id="KW-0325">Glycoprotein</keyword>
<keyword id="KW-0339">Growth factor</keyword>
<keyword id="KW-0497">Mitogen</keyword>
<keyword id="KW-1185">Reference proteome</keyword>
<keyword id="KW-0964">Secreted</keyword>
<keyword id="KW-0732">Signal</keyword>